<reference key="1">
    <citation type="submission" date="1996-07" db="EMBL/GenBank/DDBJ databases">
        <authorList>
            <person name="Anderson T.J."/>
            <person name="Macinnes J.I."/>
        </authorList>
    </citation>
    <scope>NUCLEOTIDE SEQUENCE [GENOMIC DNA]</scope>
    <source>
        <strain>CM5 / Serotype 1</strain>
    </source>
</reference>
<organism>
    <name type="scientific">Actinobacillus pleuropneumoniae</name>
    <name type="common">Haemophilus pleuropneumoniae</name>
    <dbReference type="NCBI Taxonomy" id="715"/>
    <lineage>
        <taxon>Bacteria</taxon>
        <taxon>Pseudomonadati</taxon>
        <taxon>Pseudomonadota</taxon>
        <taxon>Gammaproteobacteria</taxon>
        <taxon>Pasteurellales</taxon>
        <taxon>Pasteurellaceae</taxon>
        <taxon>Actinobacillus</taxon>
    </lineage>
</organism>
<proteinExistence type="inferred from homology"/>
<comment type="function">
    <text evidence="1">Catalyzes the transfer of the gamma-phosphate of ATP to D-galactose to form alpha-D-galactose-1-phosphate (Gal-1-P).</text>
</comment>
<comment type="catalytic activity">
    <reaction evidence="1">
        <text>alpha-D-galactose + ATP = alpha-D-galactose 1-phosphate + ADP + H(+)</text>
        <dbReference type="Rhea" id="RHEA:13553"/>
        <dbReference type="ChEBI" id="CHEBI:15378"/>
        <dbReference type="ChEBI" id="CHEBI:28061"/>
        <dbReference type="ChEBI" id="CHEBI:30616"/>
        <dbReference type="ChEBI" id="CHEBI:58336"/>
        <dbReference type="ChEBI" id="CHEBI:456216"/>
        <dbReference type="EC" id="2.7.1.6"/>
    </reaction>
</comment>
<comment type="pathway">
    <text evidence="1">Carbohydrate metabolism; galactose metabolism.</text>
</comment>
<comment type="subcellular location">
    <subcellularLocation>
        <location evidence="1">Cytoplasm</location>
    </subcellularLocation>
</comment>
<comment type="similarity">
    <text evidence="1">Belongs to the GHMP kinase family. GalK subfamily.</text>
</comment>
<dbReference type="EC" id="2.7.1.6" evidence="1"/>
<dbReference type="EMBL" id="U63732">
    <property type="protein sequence ID" value="AAB37130.1"/>
    <property type="molecule type" value="Genomic_DNA"/>
</dbReference>
<dbReference type="SMR" id="P94169"/>
<dbReference type="UniPathway" id="UPA00214"/>
<dbReference type="GO" id="GO:0005829">
    <property type="term" value="C:cytosol"/>
    <property type="evidence" value="ECO:0007669"/>
    <property type="project" value="TreeGrafter"/>
</dbReference>
<dbReference type="GO" id="GO:0005524">
    <property type="term" value="F:ATP binding"/>
    <property type="evidence" value="ECO:0007669"/>
    <property type="project" value="UniProtKB-UniRule"/>
</dbReference>
<dbReference type="GO" id="GO:0004335">
    <property type="term" value="F:galactokinase activity"/>
    <property type="evidence" value="ECO:0007669"/>
    <property type="project" value="UniProtKB-UniRule"/>
</dbReference>
<dbReference type="GO" id="GO:0000287">
    <property type="term" value="F:magnesium ion binding"/>
    <property type="evidence" value="ECO:0007669"/>
    <property type="project" value="UniProtKB-UniRule"/>
</dbReference>
<dbReference type="GO" id="GO:0006012">
    <property type="term" value="P:galactose metabolic process"/>
    <property type="evidence" value="ECO:0007669"/>
    <property type="project" value="UniProtKB-UniRule"/>
</dbReference>
<dbReference type="FunFam" id="3.30.230.10:FF:000017">
    <property type="entry name" value="Galactokinase"/>
    <property type="match status" value="1"/>
</dbReference>
<dbReference type="FunFam" id="3.30.70.890:FF:000001">
    <property type="entry name" value="Galactokinase"/>
    <property type="match status" value="1"/>
</dbReference>
<dbReference type="Gene3D" id="3.30.230.10">
    <property type="match status" value="1"/>
</dbReference>
<dbReference type="Gene3D" id="3.30.70.890">
    <property type="entry name" value="GHMP kinase, C-terminal domain"/>
    <property type="match status" value="1"/>
</dbReference>
<dbReference type="HAMAP" id="MF_00246">
    <property type="entry name" value="Galactokinase"/>
    <property type="match status" value="1"/>
</dbReference>
<dbReference type="InterPro" id="IPR000705">
    <property type="entry name" value="Galactokinase"/>
</dbReference>
<dbReference type="InterPro" id="IPR022963">
    <property type="entry name" value="Galactokinase_bac"/>
</dbReference>
<dbReference type="InterPro" id="IPR019741">
    <property type="entry name" value="Galactokinase_CS"/>
</dbReference>
<dbReference type="InterPro" id="IPR019539">
    <property type="entry name" value="GalKase_N"/>
</dbReference>
<dbReference type="InterPro" id="IPR013750">
    <property type="entry name" value="GHMP_kinase_C_dom"/>
</dbReference>
<dbReference type="InterPro" id="IPR036554">
    <property type="entry name" value="GHMP_kinase_C_sf"/>
</dbReference>
<dbReference type="InterPro" id="IPR006204">
    <property type="entry name" value="GHMP_kinase_N_dom"/>
</dbReference>
<dbReference type="InterPro" id="IPR006203">
    <property type="entry name" value="GHMP_knse_ATP-bd_CS"/>
</dbReference>
<dbReference type="InterPro" id="IPR006206">
    <property type="entry name" value="Mevalonate/galactokinase"/>
</dbReference>
<dbReference type="InterPro" id="IPR020568">
    <property type="entry name" value="Ribosomal_Su5_D2-typ_SF"/>
</dbReference>
<dbReference type="InterPro" id="IPR014721">
    <property type="entry name" value="Ribsml_uS5_D2-typ_fold_subgr"/>
</dbReference>
<dbReference type="NCBIfam" id="TIGR00131">
    <property type="entry name" value="gal_kin"/>
    <property type="match status" value="1"/>
</dbReference>
<dbReference type="NCBIfam" id="NF003472">
    <property type="entry name" value="PRK05101.1"/>
    <property type="match status" value="1"/>
</dbReference>
<dbReference type="PANTHER" id="PTHR10457:SF7">
    <property type="entry name" value="GALACTOKINASE-RELATED"/>
    <property type="match status" value="1"/>
</dbReference>
<dbReference type="PANTHER" id="PTHR10457">
    <property type="entry name" value="MEVALONATE KINASE/GALACTOKINASE"/>
    <property type="match status" value="1"/>
</dbReference>
<dbReference type="Pfam" id="PF10509">
    <property type="entry name" value="GalKase_gal_bdg"/>
    <property type="match status" value="1"/>
</dbReference>
<dbReference type="Pfam" id="PF08544">
    <property type="entry name" value="GHMP_kinases_C"/>
    <property type="match status" value="1"/>
</dbReference>
<dbReference type="Pfam" id="PF00288">
    <property type="entry name" value="GHMP_kinases_N"/>
    <property type="match status" value="1"/>
</dbReference>
<dbReference type="PIRSF" id="PIRSF000530">
    <property type="entry name" value="Galactokinase"/>
    <property type="match status" value="1"/>
</dbReference>
<dbReference type="PRINTS" id="PR00473">
    <property type="entry name" value="GALCTOKINASE"/>
</dbReference>
<dbReference type="PRINTS" id="PR00959">
    <property type="entry name" value="MEVGALKINASE"/>
</dbReference>
<dbReference type="SUPFAM" id="SSF55060">
    <property type="entry name" value="GHMP Kinase, C-terminal domain"/>
    <property type="match status" value="1"/>
</dbReference>
<dbReference type="SUPFAM" id="SSF54211">
    <property type="entry name" value="Ribosomal protein S5 domain 2-like"/>
    <property type="match status" value="1"/>
</dbReference>
<dbReference type="PROSITE" id="PS00106">
    <property type="entry name" value="GALACTOKINASE"/>
    <property type="match status" value="1"/>
</dbReference>
<dbReference type="PROSITE" id="PS00627">
    <property type="entry name" value="GHMP_KINASES_ATP"/>
    <property type="match status" value="1"/>
</dbReference>
<evidence type="ECO:0000255" key="1">
    <source>
        <dbReference type="HAMAP-Rule" id="MF_00246"/>
    </source>
</evidence>
<name>GAL1_ACTPL</name>
<gene>
    <name evidence="1" type="primary">galK</name>
</gene>
<keyword id="KW-0067">ATP-binding</keyword>
<keyword id="KW-0119">Carbohydrate metabolism</keyword>
<keyword id="KW-0963">Cytoplasm</keyword>
<keyword id="KW-0299">Galactose metabolism</keyword>
<keyword id="KW-0418">Kinase</keyword>
<keyword id="KW-0460">Magnesium</keyword>
<keyword id="KW-0479">Metal-binding</keyword>
<keyword id="KW-0547">Nucleotide-binding</keyword>
<keyword id="KW-0808">Transferase</keyword>
<feature type="chain" id="PRO_0000184601" description="Galactokinase">
    <location>
        <begin position="1"/>
        <end position="384"/>
    </location>
</feature>
<feature type="active site" description="Proton acceptor" evidence="1">
    <location>
        <position position="173"/>
    </location>
</feature>
<feature type="binding site" evidence="1">
    <location>
        <begin position="34"/>
        <end position="37"/>
    </location>
    <ligand>
        <name>substrate</name>
    </ligand>
</feature>
<feature type="binding site" evidence="1">
    <location>
        <begin position="123"/>
        <end position="129"/>
    </location>
    <ligand>
        <name>ATP</name>
        <dbReference type="ChEBI" id="CHEBI:30616"/>
    </ligand>
</feature>
<feature type="binding site" evidence="1">
    <location>
        <position position="129"/>
    </location>
    <ligand>
        <name>Mg(2+)</name>
        <dbReference type="ChEBI" id="CHEBI:18420"/>
    </ligand>
</feature>
<feature type="binding site" evidence="1">
    <location>
        <position position="161"/>
    </location>
    <ligand>
        <name>Mg(2+)</name>
        <dbReference type="ChEBI" id="CHEBI:18420"/>
    </ligand>
</feature>
<feature type="binding site" evidence="1">
    <location>
        <position position="222"/>
    </location>
    <ligand>
        <name>substrate</name>
    </ligand>
</feature>
<feature type="site" description="Transition state stabilizer" evidence="1">
    <location>
        <position position="28"/>
    </location>
</feature>
<accession>P94169</accession>
<sequence>MKPQQLATQKFSEHCGYSAAQTVFAPGRVNIIGEHTDYNDGFVMPCAINYGMAVSFSKRDDSVWRVYAIDIDEQDEFDLSRPIEPSEHKWANYVRGVVKYIQEKCPEFKQGADLAMTSDVPMSSGLSSSAALEISIGKTARVLGDLPLSLTEIALIGQQAENKFVGANCGNMDQLTSALGQKDQVIMIDCRSLDITPTPVPHGYSIAIINSNVKHDLVTGEYNSRRQECEFAARFFGVKALRDVTSERFIERAAELQAQNELAYKRAKHIISENQRVLEAVEALKANDMVKLGQLMAGSHDSMRDDFEITIPEIDYLVELAQVAIGKNGGARMTGGGFGGCIVCLVPDEKVEHLRRIIADNYEKQTGIKETFHLCTACDGVHLI</sequence>
<protein>
    <recommendedName>
        <fullName evidence="1">Galactokinase</fullName>
        <ecNumber evidence="1">2.7.1.6</ecNumber>
    </recommendedName>
    <alternativeName>
        <fullName evidence="1">Galactose kinase</fullName>
    </alternativeName>
</protein>